<sequence>MANVTVTFTITEFCLHTGISEEELNEIVGLGVVEPREIQETTWVFDDHAAIVVQRAVRLRHELALDWPGIAVALTLMDDIAHLKQENRLLRQRLSRFVAHP</sequence>
<feature type="chain" id="PRO_1000213695" description="Chaperone modulatory protein CbpM">
    <location>
        <begin position="1"/>
        <end position="101"/>
    </location>
</feature>
<reference key="1">
    <citation type="journal article" date="2009" name="J. Bacteriol.">
        <title>Genomic sequencing reveals regulatory mutations and recombinational events in the widely used MC4100 lineage of Escherichia coli K-12.</title>
        <authorList>
            <person name="Ferenci T."/>
            <person name="Zhou Z."/>
            <person name="Betteridge T."/>
            <person name="Ren Y."/>
            <person name="Liu Y."/>
            <person name="Feng L."/>
            <person name="Reeves P.R."/>
            <person name="Wang L."/>
        </authorList>
    </citation>
    <scope>NUCLEOTIDE SEQUENCE [LARGE SCALE GENOMIC DNA]</scope>
    <source>
        <strain>K12 / MC4100 / BW2952</strain>
    </source>
</reference>
<gene>
    <name evidence="1" type="primary">cbpM</name>
    <name type="ordered locus">BWG_0853</name>
</gene>
<comment type="function">
    <text evidence="1">Interacts with CbpA and inhibits both the DnaJ-like co-chaperone activity and the DNA binding activity of CbpA. Together with CbpA, modulates the activity of the DnaK chaperone system. Does not inhibit the co-chaperone activity of DnaJ.</text>
</comment>
<comment type="similarity">
    <text evidence="1">Belongs to the CbpM family.</text>
</comment>
<accession>C4ZQC7</accession>
<name>CBPM_ECOBW</name>
<organism>
    <name type="scientific">Escherichia coli (strain K12 / MC4100 / BW2952)</name>
    <dbReference type="NCBI Taxonomy" id="595496"/>
    <lineage>
        <taxon>Bacteria</taxon>
        <taxon>Pseudomonadati</taxon>
        <taxon>Pseudomonadota</taxon>
        <taxon>Gammaproteobacteria</taxon>
        <taxon>Enterobacterales</taxon>
        <taxon>Enterobacteriaceae</taxon>
        <taxon>Escherichia</taxon>
    </lineage>
</organism>
<protein>
    <recommendedName>
        <fullName evidence="1">Chaperone modulatory protein CbpM</fullName>
    </recommendedName>
</protein>
<dbReference type="EMBL" id="CP001396">
    <property type="protein sequence ID" value="ACR63786.1"/>
    <property type="molecule type" value="Genomic_DNA"/>
</dbReference>
<dbReference type="RefSeq" id="WP_000024560.1">
    <property type="nucleotide sequence ID" value="NC_012759.1"/>
</dbReference>
<dbReference type="SMR" id="C4ZQC7"/>
<dbReference type="GeneID" id="93776412"/>
<dbReference type="KEGG" id="ebw:BWG_0853"/>
<dbReference type="HOGENOM" id="CLU_144710_3_1_6"/>
<dbReference type="FunFam" id="1.10.1660.10:FF:000006">
    <property type="entry name" value="Chaperone modulatory protein CbpM"/>
    <property type="match status" value="1"/>
</dbReference>
<dbReference type="Gene3D" id="1.10.1660.10">
    <property type="match status" value="1"/>
</dbReference>
<dbReference type="HAMAP" id="MF_01155">
    <property type="entry name" value="CbpM"/>
    <property type="match status" value="1"/>
</dbReference>
<dbReference type="InterPro" id="IPR022835">
    <property type="entry name" value="CbpM"/>
</dbReference>
<dbReference type="NCBIfam" id="NF007617">
    <property type="entry name" value="PRK10265.1"/>
    <property type="match status" value="1"/>
</dbReference>
<dbReference type="Pfam" id="PF13591">
    <property type="entry name" value="MerR_2"/>
    <property type="match status" value="1"/>
</dbReference>
<evidence type="ECO:0000255" key="1">
    <source>
        <dbReference type="HAMAP-Rule" id="MF_01155"/>
    </source>
</evidence>
<proteinExistence type="inferred from homology"/>